<evidence type="ECO:0000255" key="1">
    <source>
        <dbReference type="HAMAP-Rule" id="MF_01710"/>
    </source>
</evidence>
<accession>Q8RHL0</accession>
<proteinExistence type="inferred from homology"/>
<gene>
    <name evidence="1" type="primary">ecfA1</name>
    <name type="synonym">cbiO1</name>
    <name type="ordered locus">FN2004</name>
</gene>
<protein>
    <recommendedName>
        <fullName evidence="1">Energy-coupling factor transporter ATP-binding protein EcfA1</fullName>
        <shortName evidence="1">ECF transporter A component EcfA1</shortName>
        <ecNumber evidence="1">7.-.-.-</ecNumber>
    </recommendedName>
</protein>
<comment type="function">
    <text evidence="1">ATP-binding (A) component of a common energy-coupling factor (ECF) ABC-transporter complex. Unlike classic ABC transporters this ECF transporter provides the energy necessary to transport a number of different substrates.</text>
</comment>
<comment type="subunit">
    <text evidence="1">Forms a stable energy-coupling factor (ECF) transporter complex composed of 2 membrane-embedded substrate-binding proteins (S component), 2 ATP-binding proteins (A component) and 2 transmembrane proteins (T component).</text>
</comment>
<comment type="subcellular location">
    <subcellularLocation>
        <location evidence="1">Cell inner membrane</location>
        <topology evidence="1">Peripheral membrane protein</topology>
    </subcellularLocation>
</comment>
<comment type="similarity">
    <text evidence="1">Belongs to the ABC transporter superfamily. Energy-coupling factor EcfA family.</text>
</comment>
<name>ECFA1_FUSNN</name>
<feature type="chain" id="PRO_0000092011" description="Energy-coupling factor transporter ATP-binding protein EcfA1">
    <location>
        <begin position="1"/>
        <end position="264"/>
    </location>
</feature>
<feature type="domain" description="ABC transporter" evidence="1">
    <location>
        <begin position="2"/>
        <end position="234"/>
    </location>
</feature>
<feature type="binding site" evidence="1">
    <location>
        <begin position="34"/>
        <end position="41"/>
    </location>
    <ligand>
        <name>ATP</name>
        <dbReference type="ChEBI" id="CHEBI:30616"/>
    </ligand>
</feature>
<organism>
    <name type="scientific">Fusobacterium nucleatum subsp. nucleatum (strain ATCC 25586 / DSM 15643 / BCRC 10681 / CIP 101130 / JCM 8532 / KCTC 2640 / LMG 13131 / VPI 4355)</name>
    <dbReference type="NCBI Taxonomy" id="190304"/>
    <lineage>
        <taxon>Bacteria</taxon>
        <taxon>Fusobacteriati</taxon>
        <taxon>Fusobacteriota</taxon>
        <taxon>Fusobacteriia</taxon>
        <taxon>Fusobacteriales</taxon>
        <taxon>Fusobacteriaceae</taxon>
        <taxon>Fusobacterium</taxon>
    </lineage>
</organism>
<dbReference type="EC" id="7.-.-.-" evidence="1"/>
<dbReference type="EMBL" id="AE009951">
    <property type="protein sequence ID" value="AAL94094.1"/>
    <property type="molecule type" value="Genomic_DNA"/>
</dbReference>
<dbReference type="RefSeq" id="NP_602795.1">
    <property type="nucleotide sequence ID" value="NC_003454.1"/>
</dbReference>
<dbReference type="RefSeq" id="WP_011015975.1">
    <property type="nucleotide sequence ID" value="NZ_OZ209243.1"/>
</dbReference>
<dbReference type="SMR" id="Q8RHL0"/>
<dbReference type="FunCoup" id="Q8RHL0">
    <property type="interactions" value="219"/>
</dbReference>
<dbReference type="STRING" id="190304.FN2004"/>
<dbReference type="PaxDb" id="190304-FN2004"/>
<dbReference type="EnsemblBacteria" id="AAL94094">
    <property type="protein sequence ID" value="AAL94094"/>
    <property type="gene ID" value="FN2004"/>
</dbReference>
<dbReference type="KEGG" id="fnu:FN2004"/>
<dbReference type="PATRIC" id="fig|190304.8.peg.472"/>
<dbReference type="eggNOG" id="COG1122">
    <property type="taxonomic scope" value="Bacteria"/>
</dbReference>
<dbReference type="HOGENOM" id="CLU_000604_1_22_0"/>
<dbReference type="InParanoid" id="Q8RHL0"/>
<dbReference type="BioCyc" id="FNUC190304:G1FZS-491-MONOMER"/>
<dbReference type="Proteomes" id="UP000002521">
    <property type="component" value="Chromosome"/>
</dbReference>
<dbReference type="GO" id="GO:0005886">
    <property type="term" value="C:plasma membrane"/>
    <property type="evidence" value="ECO:0007669"/>
    <property type="project" value="UniProtKB-SubCell"/>
</dbReference>
<dbReference type="GO" id="GO:0005524">
    <property type="term" value="F:ATP binding"/>
    <property type="evidence" value="ECO:0007669"/>
    <property type="project" value="UniProtKB-KW"/>
</dbReference>
<dbReference type="GO" id="GO:0016887">
    <property type="term" value="F:ATP hydrolysis activity"/>
    <property type="evidence" value="ECO:0007669"/>
    <property type="project" value="InterPro"/>
</dbReference>
<dbReference type="GO" id="GO:0055085">
    <property type="term" value="P:transmembrane transport"/>
    <property type="evidence" value="ECO:0007669"/>
    <property type="project" value="InterPro"/>
</dbReference>
<dbReference type="CDD" id="cd03225">
    <property type="entry name" value="ABC_cobalt_CbiO_domain1"/>
    <property type="match status" value="1"/>
</dbReference>
<dbReference type="FunFam" id="3.40.50.300:FF:000224">
    <property type="entry name" value="Energy-coupling factor transporter ATP-binding protein EcfA"/>
    <property type="match status" value="1"/>
</dbReference>
<dbReference type="Gene3D" id="3.40.50.300">
    <property type="entry name" value="P-loop containing nucleotide triphosphate hydrolases"/>
    <property type="match status" value="1"/>
</dbReference>
<dbReference type="InterPro" id="IPR003593">
    <property type="entry name" value="AAA+_ATPase"/>
</dbReference>
<dbReference type="InterPro" id="IPR003439">
    <property type="entry name" value="ABC_transporter-like_ATP-bd"/>
</dbReference>
<dbReference type="InterPro" id="IPR017871">
    <property type="entry name" value="ABC_transporter-like_CS"/>
</dbReference>
<dbReference type="InterPro" id="IPR015856">
    <property type="entry name" value="ABC_transpr_CbiO/EcfA_su"/>
</dbReference>
<dbReference type="InterPro" id="IPR050095">
    <property type="entry name" value="ECF_ABC_transporter_ATP-bd"/>
</dbReference>
<dbReference type="InterPro" id="IPR027417">
    <property type="entry name" value="P-loop_NTPase"/>
</dbReference>
<dbReference type="PANTHER" id="PTHR43553:SF24">
    <property type="entry name" value="ENERGY-COUPLING FACTOR TRANSPORTER ATP-BINDING PROTEIN ECFA1"/>
    <property type="match status" value="1"/>
</dbReference>
<dbReference type="PANTHER" id="PTHR43553">
    <property type="entry name" value="HEAVY METAL TRANSPORTER"/>
    <property type="match status" value="1"/>
</dbReference>
<dbReference type="Pfam" id="PF00005">
    <property type="entry name" value="ABC_tran"/>
    <property type="match status" value="1"/>
</dbReference>
<dbReference type="SMART" id="SM00382">
    <property type="entry name" value="AAA"/>
    <property type="match status" value="1"/>
</dbReference>
<dbReference type="SUPFAM" id="SSF52540">
    <property type="entry name" value="P-loop containing nucleoside triphosphate hydrolases"/>
    <property type="match status" value="1"/>
</dbReference>
<dbReference type="PROSITE" id="PS00211">
    <property type="entry name" value="ABC_TRANSPORTER_1"/>
    <property type="match status" value="1"/>
</dbReference>
<dbReference type="PROSITE" id="PS50893">
    <property type="entry name" value="ABC_TRANSPORTER_2"/>
    <property type="match status" value="1"/>
</dbReference>
<dbReference type="PROSITE" id="PS51246">
    <property type="entry name" value="CBIO"/>
    <property type="match status" value="1"/>
</dbReference>
<keyword id="KW-0067">ATP-binding</keyword>
<keyword id="KW-0997">Cell inner membrane</keyword>
<keyword id="KW-1003">Cell membrane</keyword>
<keyword id="KW-0472">Membrane</keyword>
<keyword id="KW-0547">Nucleotide-binding</keyword>
<keyword id="KW-1185">Reference proteome</keyword>
<keyword id="KW-1278">Translocase</keyword>
<keyword id="KW-0813">Transport</keyword>
<sequence length="264" mass="29923">MIQVENLSFSYQNNKVFKNLSFSIKKGEYLCIIGKNGSGKSTLAKLLAGLIFKQEGSIKISGYDTKNQKDLLEIRKLVGIIFQNPENQIINTTVFDEVVFGLENLATPRENIKEIAENSLKSVALLEYKDRLTYQLSGGEKQRLAIASVLAMGTEILIFDEAISMLDPVGKKEVLKLMKELNSQGKTIIHITHNRNDILEASEVMVLSNGEIKYQGNPYKIFEDDEFNPFLIKIKNILEKNNIKIDDKNINMEDLVRLVYENIS</sequence>
<reference key="1">
    <citation type="journal article" date="2002" name="J. Bacteriol.">
        <title>Genome sequence and analysis of the oral bacterium Fusobacterium nucleatum strain ATCC 25586.</title>
        <authorList>
            <person name="Kapatral V."/>
            <person name="Anderson I."/>
            <person name="Ivanova N."/>
            <person name="Reznik G."/>
            <person name="Los T."/>
            <person name="Lykidis A."/>
            <person name="Bhattacharyya A."/>
            <person name="Bartman A."/>
            <person name="Gardner W."/>
            <person name="Grechkin G."/>
            <person name="Zhu L."/>
            <person name="Vasieva O."/>
            <person name="Chu L."/>
            <person name="Kogan Y."/>
            <person name="Chaga O."/>
            <person name="Goltsman E."/>
            <person name="Bernal A."/>
            <person name="Larsen N."/>
            <person name="D'Souza M."/>
            <person name="Walunas T."/>
            <person name="Pusch G."/>
            <person name="Haselkorn R."/>
            <person name="Fonstein M."/>
            <person name="Kyrpides N.C."/>
            <person name="Overbeek R."/>
        </authorList>
    </citation>
    <scope>NUCLEOTIDE SEQUENCE [LARGE SCALE GENOMIC DNA]</scope>
    <source>
        <strain>ATCC 25586 / DSM 15643 / BCRC 10681 / CIP 101130 / JCM 8532 / KCTC 2640 / LMG 13131 / VPI 4355</strain>
    </source>
</reference>